<name>RL1_AZOPC</name>
<reference key="1">
    <citation type="journal article" date="2008" name="Science">
        <title>Genome of an endosymbiont coupling N2 fixation to cellulolysis within RT protist cells in termite gut.</title>
        <authorList>
            <person name="Hongoh Y."/>
            <person name="Sharma V.K."/>
            <person name="Prakash T."/>
            <person name="Noda S."/>
            <person name="Toh H."/>
            <person name="Taylor T.D."/>
            <person name="Kudo T."/>
            <person name="Sakaki Y."/>
            <person name="Toyoda A."/>
            <person name="Hattori M."/>
            <person name="Ohkuma M."/>
        </authorList>
    </citation>
    <scope>NUCLEOTIDE SEQUENCE [LARGE SCALE GENOMIC DNA]</scope>
</reference>
<keyword id="KW-1185">Reference proteome</keyword>
<keyword id="KW-0678">Repressor</keyword>
<keyword id="KW-0687">Ribonucleoprotein</keyword>
<keyword id="KW-0689">Ribosomal protein</keyword>
<keyword id="KW-0694">RNA-binding</keyword>
<keyword id="KW-0699">rRNA-binding</keyword>
<keyword id="KW-0810">Translation regulation</keyword>
<keyword id="KW-0820">tRNA-binding</keyword>
<gene>
    <name evidence="1" type="primary">rplA</name>
    <name type="ordered locus">CFPG_009</name>
</gene>
<comment type="function">
    <text evidence="1">Binds directly to 23S rRNA. The L1 stalk is quite mobile in the ribosome, and is involved in E site tRNA release.</text>
</comment>
<comment type="function">
    <text evidence="1">Protein L1 is also a translational repressor protein, it controls the translation of the L11 operon by binding to its mRNA.</text>
</comment>
<comment type="subunit">
    <text evidence="1">Part of the 50S ribosomal subunit.</text>
</comment>
<comment type="similarity">
    <text evidence="1">Belongs to the universal ribosomal protein uL1 family.</text>
</comment>
<feature type="chain" id="PRO_1000141356" description="Large ribosomal subunit protein uL1">
    <location>
        <begin position="1"/>
        <end position="232"/>
    </location>
</feature>
<accession>B6YQ00</accession>
<protein>
    <recommendedName>
        <fullName evidence="1">Large ribosomal subunit protein uL1</fullName>
    </recommendedName>
    <alternativeName>
        <fullName evidence="2">50S ribosomal protein L1</fullName>
    </alternativeName>
</protein>
<organism>
    <name type="scientific">Azobacteroides pseudotrichonymphae genomovar. CFP2</name>
    <dbReference type="NCBI Taxonomy" id="511995"/>
    <lineage>
        <taxon>Bacteria</taxon>
        <taxon>Pseudomonadati</taxon>
        <taxon>Bacteroidota</taxon>
        <taxon>Bacteroidia</taxon>
        <taxon>Bacteroidales</taxon>
        <taxon>Candidatus Azobacteroides</taxon>
    </lineage>
</organism>
<sequence length="232" mass="25272">MGKLTKNQKLVLSKIEVGRMYTFKEASVVIKEITTTMFDASVDMDVRLGIDPRKANQMIRGVVSLPHGLGKRVRVLALVTPDQEGFARNAGADYVGLNEYIEKIKNGWTDVDVIIAHPSVMGRVGILGKILGPRGLMPNPKSGTVANDVSTAVKEVKQGKIDFRVDKGGIVHTSIGRISFTPEQICDNAKEFMATLLKVRPAVVRGIYIKSVYLSSTMSPSLRVDSKSVDGD</sequence>
<evidence type="ECO:0000255" key="1">
    <source>
        <dbReference type="HAMAP-Rule" id="MF_01318"/>
    </source>
</evidence>
<evidence type="ECO:0000305" key="2"/>
<dbReference type="EMBL" id="AP010656">
    <property type="protein sequence ID" value="BAG83272.1"/>
    <property type="molecule type" value="Genomic_DNA"/>
</dbReference>
<dbReference type="RefSeq" id="WP_012573033.1">
    <property type="nucleotide sequence ID" value="NC_011565.1"/>
</dbReference>
<dbReference type="SMR" id="B6YQ00"/>
<dbReference type="STRING" id="511995.CFPG_009"/>
<dbReference type="KEGG" id="aps:CFPG_009"/>
<dbReference type="eggNOG" id="COG0081">
    <property type="taxonomic scope" value="Bacteria"/>
</dbReference>
<dbReference type="HOGENOM" id="CLU_062853_0_0_10"/>
<dbReference type="OrthoDB" id="9803740at2"/>
<dbReference type="Proteomes" id="UP000000723">
    <property type="component" value="Chromosome"/>
</dbReference>
<dbReference type="GO" id="GO:0015934">
    <property type="term" value="C:large ribosomal subunit"/>
    <property type="evidence" value="ECO:0007669"/>
    <property type="project" value="InterPro"/>
</dbReference>
<dbReference type="GO" id="GO:0019843">
    <property type="term" value="F:rRNA binding"/>
    <property type="evidence" value="ECO:0007669"/>
    <property type="project" value="UniProtKB-UniRule"/>
</dbReference>
<dbReference type="GO" id="GO:0003735">
    <property type="term" value="F:structural constituent of ribosome"/>
    <property type="evidence" value="ECO:0007669"/>
    <property type="project" value="InterPro"/>
</dbReference>
<dbReference type="GO" id="GO:0000049">
    <property type="term" value="F:tRNA binding"/>
    <property type="evidence" value="ECO:0007669"/>
    <property type="project" value="UniProtKB-KW"/>
</dbReference>
<dbReference type="GO" id="GO:0006417">
    <property type="term" value="P:regulation of translation"/>
    <property type="evidence" value="ECO:0007669"/>
    <property type="project" value="UniProtKB-KW"/>
</dbReference>
<dbReference type="GO" id="GO:0006412">
    <property type="term" value="P:translation"/>
    <property type="evidence" value="ECO:0007669"/>
    <property type="project" value="UniProtKB-UniRule"/>
</dbReference>
<dbReference type="CDD" id="cd00403">
    <property type="entry name" value="Ribosomal_L1"/>
    <property type="match status" value="1"/>
</dbReference>
<dbReference type="FunFam" id="3.40.50.790:FF:000001">
    <property type="entry name" value="50S ribosomal protein L1"/>
    <property type="match status" value="1"/>
</dbReference>
<dbReference type="Gene3D" id="3.30.190.20">
    <property type="match status" value="1"/>
</dbReference>
<dbReference type="Gene3D" id="3.40.50.790">
    <property type="match status" value="1"/>
</dbReference>
<dbReference type="HAMAP" id="MF_01318_B">
    <property type="entry name" value="Ribosomal_uL1_B"/>
    <property type="match status" value="1"/>
</dbReference>
<dbReference type="InterPro" id="IPR005878">
    <property type="entry name" value="Ribosom_uL1_bac-type"/>
</dbReference>
<dbReference type="InterPro" id="IPR002143">
    <property type="entry name" value="Ribosomal_uL1"/>
</dbReference>
<dbReference type="InterPro" id="IPR023674">
    <property type="entry name" value="Ribosomal_uL1-like"/>
</dbReference>
<dbReference type="InterPro" id="IPR028364">
    <property type="entry name" value="Ribosomal_uL1/biogenesis"/>
</dbReference>
<dbReference type="InterPro" id="IPR016095">
    <property type="entry name" value="Ribosomal_uL1_3-a/b-sand"/>
</dbReference>
<dbReference type="InterPro" id="IPR023673">
    <property type="entry name" value="Ribosomal_uL1_CS"/>
</dbReference>
<dbReference type="NCBIfam" id="TIGR01169">
    <property type="entry name" value="rplA_bact"/>
    <property type="match status" value="1"/>
</dbReference>
<dbReference type="PANTHER" id="PTHR36427">
    <property type="entry name" value="54S RIBOSOMAL PROTEIN L1, MITOCHONDRIAL"/>
    <property type="match status" value="1"/>
</dbReference>
<dbReference type="PANTHER" id="PTHR36427:SF3">
    <property type="entry name" value="LARGE RIBOSOMAL SUBUNIT PROTEIN UL1M"/>
    <property type="match status" value="1"/>
</dbReference>
<dbReference type="Pfam" id="PF00687">
    <property type="entry name" value="Ribosomal_L1"/>
    <property type="match status" value="1"/>
</dbReference>
<dbReference type="PIRSF" id="PIRSF002155">
    <property type="entry name" value="Ribosomal_L1"/>
    <property type="match status" value="1"/>
</dbReference>
<dbReference type="SUPFAM" id="SSF56808">
    <property type="entry name" value="Ribosomal protein L1"/>
    <property type="match status" value="1"/>
</dbReference>
<dbReference type="PROSITE" id="PS01199">
    <property type="entry name" value="RIBOSOMAL_L1"/>
    <property type="match status" value="1"/>
</dbReference>
<proteinExistence type="inferred from homology"/>